<name>RL34_BURA4</name>
<comment type="similarity">
    <text evidence="1">Belongs to the bacterial ribosomal protein bL34 family.</text>
</comment>
<organism>
    <name type="scientific">Burkholderia ambifaria (strain MC40-6)</name>
    <dbReference type="NCBI Taxonomy" id="398577"/>
    <lineage>
        <taxon>Bacteria</taxon>
        <taxon>Pseudomonadati</taxon>
        <taxon>Pseudomonadota</taxon>
        <taxon>Betaproteobacteria</taxon>
        <taxon>Burkholderiales</taxon>
        <taxon>Burkholderiaceae</taxon>
        <taxon>Burkholderia</taxon>
        <taxon>Burkholderia cepacia complex</taxon>
    </lineage>
</organism>
<keyword id="KW-0687">Ribonucleoprotein</keyword>
<keyword id="KW-0689">Ribosomal protein</keyword>
<accession>B1YQK0</accession>
<protein>
    <recommendedName>
        <fullName evidence="1">Large ribosomal subunit protein bL34</fullName>
    </recommendedName>
    <alternativeName>
        <fullName evidence="2">50S ribosomal protein L34</fullName>
    </alternativeName>
</protein>
<feature type="chain" id="PRO_1000196012" description="Large ribosomal subunit protein bL34">
    <location>
        <begin position="1"/>
        <end position="44"/>
    </location>
</feature>
<reference key="1">
    <citation type="submission" date="2008-04" db="EMBL/GenBank/DDBJ databases">
        <title>Complete sequence of chromosome 1 of Burkholderia ambifaria MC40-6.</title>
        <authorList>
            <person name="Copeland A."/>
            <person name="Lucas S."/>
            <person name="Lapidus A."/>
            <person name="Glavina del Rio T."/>
            <person name="Dalin E."/>
            <person name="Tice H."/>
            <person name="Pitluck S."/>
            <person name="Chain P."/>
            <person name="Malfatti S."/>
            <person name="Shin M."/>
            <person name="Vergez L."/>
            <person name="Lang D."/>
            <person name="Schmutz J."/>
            <person name="Larimer F."/>
            <person name="Land M."/>
            <person name="Hauser L."/>
            <person name="Kyrpides N."/>
            <person name="Lykidis A."/>
            <person name="Ramette A."/>
            <person name="Konstantinidis K."/>
            <person name="Tiedje J."/>
            <person name="Richardson P."/>
        </authorList>
    </citation>
    <scope>NUCLEOTIDE SEQUENCE [LARGE SCALE GENOMIC DNA]</scope>
    <source>
        <strain>MC40-6</strain>
    </source>
</reference>
<evidence type="ECO:0000255" key="1">
    <source>
        <dbReference type="HAMAP-Rule" id="MF_00391"/>
    </source>
</evidence>
<evidence type="ECO:0000305" key="2"/>
<gene>
    <name evidence="1" type="primary">rpmH</name>
    <name type="ordered locus">BamMC406_3102</name>
</gene>
<sequence>MKRTYQPSVTRRKRTHGFRVRMKTAGGRKVINARRAKGRKRLAI</sequence>
<proteinExistence type="inferred from homology"/>
<dbReference type="EMBL" id="CP001025">
    <property type="protein sequence ID" value="ACB65577.1"/>
    <property type="molecule type" value="Genomic_DNA"/>
</dbReference>
<dbReference type="RefSeq" id="WP_004198824.1">
    <property type="nucleotide sequence ID" value="NC_010551.1"/>
</dbReference>
<dbReference type="SMR" id="B1YQK0"/>
<dbReference type="GeneID" id="98107775"/>
<dbReference type="KEGG" id="bac:BamMC406_3102"/>
<dbReference type="HOGENOM" id="CLU_129938_2_0_4"/>
<dbReference type="OrthoDB" id="9804164at2"/>
<dbReference type="Proteomes" id="UP000001680">
    <property type="component" value="Chromosome 1"/>
</dbReference>
<dbReference type="GO" id="GO:1990904">
    <property type="term" value="C:ribonucleoprotein complex"/>
    <property type="evidence" value="ECO:0007669"/>
    <property type="project" value="UniProtKB-KW"/>
</dbReference>
<dbReference type="GO" id="GO:0005840">
    <property type="term" value="C:ribosome"/>
    <property type="evidence" value="ECO:0007669"/>
    <property type="project" value="UniProtKB-KW"/>
</dbReference>
<dbReference type="GO" id="GO:0003735">
    <property type="term" value="F:structural constituent of ribosome"/>
    <property type="evidence" value="ECO:0007669"/>
    <property type="project" value="InterPro"/>
</dbReference>
<dbReference type="GO" id="GO:0006412">
    <property type="term" value="P:translation"/>
    <property type="evidence" value="ECO:0007669"/>
    <property type="project" value="UniProtKB-UniRule"/>
</dbReference>
<dbReference type="FunFam" id="1.10.287.3980:FF:000001">
    <property type="entry name" value="Mitochondrial ribosomal protein L34"/>
    <property type="match status" value="1"/>
</dbReference>
<dbReference type="Gene3D" id="1.10.287.3980">
    <property type="match status" value="1"/>
</dbReference>
<dbReference type="HAMAP" id="MF_00391">
    <property type="entry name" value="Ribosomal_bL34"/>
    <property type="match status" value="1"/>
</dbReference>
<dbReference type="InterPro" id="IPR000271">
    <property type="entry name" value="Ribosomal_bL34"/>
</dbReference>
<dbReference type="InterPro" id="IPR020939">
    <property type="entry name" value="Ribosomal_bL34_CS"/>
</dbReference>
<dbReference type="NCBIfam" id="TIGR01030">
    <property type="entry name" value="rpmH_bact"/>
    <property type="match status" value="1"/>
</dbReference>
<dbReference type="PANTHER" id="PTHR14503:SF4">
    <property type="entry name" value="LARGE RIBOSOMAL SUBUNIT PROTEIN BL34M"/>
    <property type="match status" value="1"/>
</dbReference>
<dbReference type="PANTHER" id="PTHR14503">
    <property type="entry name" value="MITOCHONDRIAL RIBOSOMAL PROTEIN 34 FAMILY MEMBER"/>
    <property type="match status" value="1"/>
</dbReference>
<dbReference type="Pfam" id="PF00468">
    <property type="entry name" value="Ribosomal_L34"/>
    <property type="match status" value="1"/>
</dbReference>
<dbReference type="PROSITE" id="PS00784">
    <property type="entry name" value="RIBOSOMAL_L34"/>
    <property type="match status" value="1"/>
</dbReference>